<gene>
    <name evidence="1" type="primary">purA</name>
    <name type="ordered locus">Sfri_3357</name>
</gene>
<organism>
    <name type="scientific">Shewanella frigidimarina (strain NCIMB 400)</name>
    <dbReference type="NCBI Taxonomy" id="318167"/>
    <lineage>
        <taxon>Bacteria</taxon>
        <taxon>Pseudomonadati</taxon>
        <taxon>Pseudomonadota</taxon>
        <taxon>Gammaproteobacteria</taxon>
        <taxon>Alteromonadales</taxon>
        <taxon>Shewanellaceae</taxon>
        <taxon>Shewanella</taxon>
    </lineage>
</organism>
<comment type="function">
    <text evidence="1">Plays an important role in the de novo pathway of purine nucleotide biosynthesis. Catalyzes the first committed step in the biosynthesis of AMP from IMP.</text>
</comment>
<comment type="catalytic activity">
    <reaction evidence="1">
        <text>IMP + L-aspartate + GTP = N(6)-(1,2-dicarboxyethyl)-AMP + GDP + phosphate + 2 H(+)</text>
        <dbReference type="Rhea" id="RHEA:15753"/>
        <dbReference type="ChEBI" id="CHEBI:15378"/>
        <dbReference type="ChEBI" id="CHEBI:29991"/>
        <dbReference type="ChEBI" id="CHEBI:37565"/>
        <dbReference type="ChEBI" id="CHEBI:43474"/>
        <dbReference type="ChEBI" id="CHEBI:57567"/>
        <dbReference type="ChEBI" id="CHEBI:58053"/>
        <dbReference type="ChEBI" id="CHEBI:58189"/>
        <dbReference type="EC" id="6.3.4.4"/>
    </reaction>
</comment>
<comment type="cofactor">
    <cofactor evidence="1">
        <name>Mg(2+)</name>
        <dbReference type="ChEBI" id="CHEBI:18420"/>
    </cofactor>
    <text evidence="1">Binds 1 Mg(2+) ion per subunit.</text>
</comment>
<comment type="pathway">
    <text evidence="1">Purine metabolism; AMP biosynthesis via de novo pathway; AMP from IMP: step 1/2.</text>
</comment>
<comment type="subunit">
    <text evidence="1">Homodimer.</text>
</comment>
<comment type="subcellular location">
    <subcellularLocation>
        <location evidence="1">Cytoplasm</location>
    </subcellularLocation>
</comment>
<comment type="similarity">
    <text evidence="1">Belongs to the adenylosuccinate synthetase family.</text>
</comment>
<sequence length="431" mass="46896">MGKNVVVLGTQWGDEGKGKIVDLLTEQAKYVVRYQGGHNAGHTLVIDGEKTVLHLIPSGILRDNVKCIIGNGVVVAPDALMKEINMLKGRGVPVEERLLISEACPLILPFHCALDIAREKARGNQAIGTTGRGIGPAYEDKVSRRGLRIGDLFNAELFATKLQEVMKYHNFMLTEYYKVEAVDYQQTLDDALAIADYLKSMCTDVSEMLDVARKAGEPILFEGAQGTLLDIDHGTYPFVTSSNTTAGGVATGSGFGPRHLDYVLGIMKAYTTRVGAGPFPTELANEIGDYIGEKGQEFGATTGRKRRPGWLDAVAMRRAVQINSVSGFCLTKLDVLDGLKEVKICVGYQYADGTVSKVTPLAAEGYDLVTPIYETMPGWSETTFGATTIEQLPPAAINYIKRLEELLETPIDIISTGPDRNETMILVNPFK</sequence>
<dbReference type="EC" id="6.3.4.4" evidence="1"/>
<dbReference type="EMBL" id="CP000447">
    <property type="protein sequence ID" value="ABI73193.1"/>
    <property type="molecule type" value="Genomic_DNA"/>
</dbReference>
<dbReference type="RefSeq" id="WP_011638795.1">
    <property type="nucleotide sequence ID" value="NC_008345.1"/>
</dbReference>
<dbReference type="SMR" id="Q07XS1"/>
<dbReference type="STRING" id="318167.Sfri_3357"/>
<dbReference type="KEGG" id="sfr:Sfri_3357"/>
<dbReference type="eggNOG" id="COG0104">
    <property type="taxonomic scope" value="Bacteria"/>
</dbReference>
<dbReference type="HOGENOM" id="CLU_029848_0_0_6"/>
<dbReference type="OrthoDB" id="9807553at2"/>
<dbReference type="UniPathway" id="UPA00075">
    <property type="reaction ID" value="UER00335"/>
</dbReference>
<dbReference type="Proteomes" id="UP000000684">
    <property type="component" value="Chromosome"/>
</dbReference>
<dbReference type="GO" id="GO:0005737">
    <property type="term" value="C:cytoplasm"/>
    <property type="evidence" value="ECO:0007669"/>
    <property type="project" value="UniProtKB-SubCell"/>
</dbReference>
<dbReference type="GO" id="GO:0004019">
    <property type="term" value="F:adenylosuccinate synthase activity"/>
    <property type="evidence" value="ECO:0007669"/>
    <property type="project" value="UniProtKB-UniRule"/>
</dbReference>
<dbReference type="GO" id="GO:0005525">
    <property type="term" value="F:GTP binding"/>
    <property type="evidence" value="ECO:0007669"/>
    <property type="project" value="UniProtKB-UniRule"/>
</dbReference>
<dbReference type="GO" id="GO:0000287">
    <property type="term" value="F:magnesium ion binding"/>
    <property type="evidence" value="ECO:0007669"/>
    <property type="project" value="UniProtKB-UniRule"/>
</dbReference>
<dbReference type="GO" id="GO:0044208">
    <property type="term" value="P:'de novo' AMP biosynthetic process"/>
    <property type="evidence" value="ECO:0007669"/>
    <property type="project" value="UniProtKB-UniRule"/>
</dbReference>
<dbReference type="GO" id="GO:0046040">
    <property type="term" value="P:IMP metabolic process"/>
    <property type="evidence" value="ECO:0007669"/>
    <property type="project" value="TreeGrafter"/>
</dbReference>
<dbReference type="CDD" id="cd03108">
    <property type="entry name" value="AdSS"/>
    <property type="match status" value="1"/>
</dbReference>
<dbReference type="FunFam" id="1.10.300.10:FF:000001">
    <property type="entry name" value="Adenylosuccinate synthetase"/>
    <property type="match status" value="1"/>
</dbReference>
<dbReference type="FunFam" id="3.90.170.10:FF:000001">
    <property type="entry name" value="Adenylosuccinate synthetase"/>
    <property type="match status" value="1"/>
</dbReference>
<dbReference type="Gene3D" id="3.40.440.10">
    <property type="entry name" value="Adenylosuccinate Synthetase, subunit A, domain 1"/>
    <property type="match status" value="1"/>
</dbReference>
<dbReference type="Gene3D" id="1.10.300.10">
    <property type="entry name" value="Adenylosuccinate Synthetase, subunit A, domain 2"/>
    <property type="match status" value="1"/>
</dbReference>
<dbReference type="Gene3D" id="3.90.170.10">
    <property type="entry name" value="Adenylosuccinate Synthetase, subunit A, domain 3"/>
    <property type="match status" value="1"/>
</dbReference>
<dbReference type="HAMAP" id="MF_00011">
    <property type="entry name" value="Adenylosucc_synth"/>
    <property type="match status" value="1"/>
</dbReference>
<dbReference type="InterPro" id="IPR018220">
    <property type="entry name" value="Adenylosuccin_syn_GTP-bd"/>
</dbReference>
<dbReference type="InterPro" id="IPR033128">
    <property type="entry name" value="Adenylosuccin_syn_Lys_AS"/>
</dbReference>
<dbReference type="InterPro" id="IPR042109">
    <property type="entry name" value="Adenylosuccinate_synth_dom1"/>
</dbReference>
<dbReference type="InterPro" id="IPR042110">
    <property type="entry name" value="Adenylosuccinate_synth_dom2"/>
</dbReference>
<dbReference type="InterPro" id="IPR042111">
    <property type="entry name" value="Adenylosuccinate_synth_dom3"/>
</dbReference>
<dbReference type="InterPro" id="IPR001114">
    <property type="entry name" value="Adenylosuccinate_synthetase"/>
</dbReference>
<dbReference type="InterPro" id="IPR027417">
    <property type="entry name" value="P-loop_NTPase"/>
</dbReference>
<dbReference type="NCBIfam" id="NF002223">
    <property type="entry name" value="PRK01117.1"/>
    <property type="match status" value="1"/>
</dbReference>
<dbReference type="NCBIfam" id="TIGR00184">
    <property type="entry name" value="purA"/>
    <property type="match status" value="1"/>
</dbReference>
<dbReference type="PANTHER" id="PTHR11846">
    <property type="entry name" value="ADENYLOSUCCINATE SYNTHETASE"/>
    <property type="match status" value="1"/>
</dbReference>
<dbReference type="PANTHER" id="PTHR11846:SF0">
    <property type="entry name" value="ADENYLOSUCCINATE SYNTHETASE"/>
    <property type="match status" value="1"/>
</dbReference>
<dbReference type="Pfam" id="PF00709">
    <property type="entry name" value="Adenylsucc_synt"/>
    <property type="match status" value="1"/>
</dbReference>
<dbReference type="SMART" id="SM00788">
    <property type="entry name" value="Adenylsucc_synt"/>
    <property type="match status" value="1"/>
</dbReference>
<dbReference type="SUPFAM" id="SSF52540">
    <property type="entry name" value="P-loop containing nucleoside triphosphate hydrolases"/>
    <property type="match status" value="1"/>
</dbReference>
<dbReference type="PROSITE" id="PS01266">
    <property type="entry name" value="ADENYLOSUCCIN_SYN_1"/>
    <property type="match status" value="1"/>
</dbReference>
<dbReference type="PROSITE" id="PS00513">
    <property type="entry name" value="ADENYLOSUCCIN_SYN_2"/>
    <property type="match status" value="1"/>
</dbReference>
<proteinExistence type="inferred from homology"/>
<name>PURA_SHEFN</name>
<keyword id="KW-0963">Cytoplasm</keyword>
<keyword id="KW-0342">GTP-binding</keyword>
<keyword id="KW-0436">Ligase</keyword>
<keyword id="KW-0460">Magnesium</keyword>
<keyword id="KW-0479">Metal-binding</keyword>
<keyword id="KW-0547">Nucleotide-binding</keyword>
<keyword id="KW-0658">Purine biosynthesis</keyword>
<keyword id="KW-1185">Reference proteome</keyword>
<protein>
    <recommendedName>
        <fullName evidence="1">Adenylosuccinate synthetase</fullName>
        <shortName evidence="1">AMPSase</shortName>
        <shortName evidence="1">AdSS</shortName>
        <ecNumber evidence="1">6.3.4.4</ecNumber>
    </recommendedName>
    <alternativeName>
        <fullName evidence="1">IMP--aspartate ligase</fullName>
    </alternativeName>
</protein>
<evidence type="ECO:0000255" key="1">
    <source>
        <dbReference type="HAMAP-Rule" id="MF_00011"/>
    </source>
</evidence>
<accession>Q07XS1</accession>
<reference key="1">
    <citation type="submission" date="2006-08" db="EMBL/GenBank/DDBJ databases">
        <title>Complete sequence of Shewanella frigidimarina NCIMB 400.</title>
        <authorList>
            <consortium name="US DOE Joint Genome Institute"/>
            <person name="Copeland A."/>
            <person name="Lucas S."/>
            <person name="Lapidus A."/>
            <person name="Barry K."/>
            <person name="Detter J.C."/>
            <person name="Glavina del Rio T."/>
            <person name="Hammon N."/>
            <person name="Israni S."/>
            <person name="Dalin E."/>
            <person name="Tice H."/>
            <person name="Pitluck S."/>
            <person name="Fredrickson J.K."/>
            <person name="Kolker E."/>
            <person name="McCuel L.A."/>
            <person name="DiChristina T."/>
            <person name="Nealson K.H."/>
            <person name="Newman D."/>
            <person name="Tiedje J.M."/>
            <person name="Zhou J."/>
            <person name="Romine M.F."/>
            <person name="Culley D.E."/>
            <person name="Serres M."/>
            <person name="Chertkov O."/>
            <person name="Brettin T."/>
            <person name="Bruce D."/>
            <person name="Han C."/>
            <person name="Tapia R."/>
            <person name="Gilna P."/>
            <person name="Schmutz J."/>
            <person name="Larimer F."/>
            <person name="Land M."/>
            <person name="Hauser L."/>
            <person name="Kyrpides N."/>
            <person name="Mikhailova N."/>
            <person name="Richardson P."/>
        </authorList>
    </citation>
    <scope>NUCLEOTIDE SEQUENCE [LARGE SCALE GENOMIC DNA]</scope>
    <source>
        <strain>NCIMB 400</strain>
    </source>
</reference>
<feature type="chain" id="PRO_1000000917" description="Adenylosuccinate synthetase">
    <location>
        <begin position="1"/>
        <end position="431"/>
    </location>
</feature>
<feature type="active site" description="Proton acceptor" evidence="1">
    <location>
        <position position="14"/>
    </location>
</feature>
<feature type="active site" description="Proton donor" evidence="1">
    <location>
        <position position="42"/>
    </location>
</feature>
<feature type="binding site" evidence="1">
    <location>
        <begin position="13"/>
        <end position="19"/>
    </location>
    <ligand>
        <name>GTP</name>
        <dbReference type="ChEBI" id="CHEBI:37565"/>
    </ligand>
</feature>
<feature type="binding site" description="in other chain" evidence="1">
    <location>
        <begin position="14"/>
        <end position="17"/>
    </location>
    <ligand>
        <name>IMP</name>
        <dbReference type="ChEBI" id="CHEBI:58053"/>
        <note>ligand shared between dimeric partners</note>
    </ligand>
</feature>
<feature type="binding site" evidence="1">
    <location>
        <position position="14"/>
    </location>
    <ligand>
        <name>Mg(2+)</name>
        <dbReference type="ChEBI" id="CHEBI:18420"/>
    </ligand>
</feature>
<feature type="binding site" description="in other chain" evidence="1">
    <location>
        <begin position="39"/>
        <end position="42"/>
    </location>
    <ligand>
        <name>IMP</name>
        <dbReference type="ChEBI" id="CHEBI:58053"/>
        <note>ligand shared between dimeric partners</note>
    </ligand>
</feature>
<feature type="binding site" evidence="1">
    <location>
        <begin position="41"/>
        <end position="43"/>
    </location>
    <ligand>
        <name>GTP</name>
        <dbReference type="ChEBI" id="CHEBI:37565"/>
    </ligand>
</feature>
<feature type="binding site" evidence="1">
    <location>
        <position position="41"/>
    </location>
    <ligand>
        <name>Mg(2+)</name>
        <dbReference type="ChEBI" id="CHEBI:18420"/>
    </ligand>
</feature>
<feature type="binding site" description="in other chain" evidence="1">
    <location>
        <position position="130"/>
    </location>
    <ligand>
        <name>IMP</name>
        <dbReference type="ChEBI" id="CHEBI:58053"/>
        <note>ligand shared between dimeric partners</note>
    </ligand>
</feature>
<feature type="binding site" evidence="1">
    <location>
        <position position="144"/>
    </location>
    <ligand>
        <name>IMP</name>
        <dbReference type="ChEBI" id="CHEBI:58053"/>
        <note>ligand shared between dimeric partners</note>
    </ligand>
</feature>
<feature type="binding site" description="in other chain" evidence="1">
    <location>
        <position position="225"/>
    </location>
    <ligand>
        <name>IMP</name>
        <dbReference type="ChEBI" id="CHEBI:58053"/>
        <note>ligand shared between dimeric partners</note>
    </ligand>
</feature>
<feature type="binding site" description="in other chain" evidence="1">
    <location>
        <position position="240"/>
    </location>
    <ligand>
        <name>IMP</name>
        <dbReference type="ChEBI" id="CHEBI:58053"/>
        <note>ligand shared between dimeric partners</note>
    </ligand>
</feature>
<feature type="binding site" evidence="1">
    <location>
        <begin position="300"/>
        <end position="306"/>
    </location>
    <ligand>
        <name>substrate</name>
    </ligand>
</feature>
<feature type="binding site" description="in other chain" evidence="1">
    <location>
        <position position="304"/>
    </location>
    <ligand>
        <name>IMP</name>
        <dbReference type="ChEBI" id="CHEBI:58053"/>
        <note>ligand shared between dimeric partners</note>
    </ligand>
</feature>
<feature type="binding site" evidence="1">
    <location>
        <position position="306"/>
    </location>
    <ligand>
        <name>GTP</name>
        <dbReference type="ChEBI" id="CHEBI:37565"/>
    </ligand>
</feature>
<feature type="binding site" evidence="1">
    <location>
        <begin position="332"/>
        <end position="334"/>
    </location>
    <ligand>
        <name>GTP</name>
        <dbReference type="ChEBI" id="CHEBI:37565"/>
    </ligand>
</feature>
<feature type="binding site" evidence="1">
    <location>
        <begin position="415"/>
        <end position="417"/>
    </location>
    <ligand>
        <name>GTP</name>
        <dbReference type="ChEBI" id="CHEBI:37565"/>
    </ligand>
</feature>